<protein>
    <recommendedName>
        <fullName evidence="1">1-(5-phosphoribosyl)-5-[(5-phosphoribosylamino)methylideneamino] imidazole-4-carboxamide isomerase</fullName>
        <ecNumber evidence="1">5.3.1.16</ecNumber>
    </recommendedName>
    <alternativeName>
        <fullName evidence="1">Phosphoribosylformimino-5-aminoimidazole carboxamide ribotide isomerase</fullName>
    </alternativeName>
</protein>
<accession>Q21U92</accession>
<dbReference type="EC" id="5.3.1.16" evidence="1"/>
<dbReference type="EMBL" id="CP000267">
    <property type="protein sequence ID" value="ABD70661.1"/>
    <property type="molecule type" value="Genomic_DNA"/>
</dbReference>
<dbReference type="RefSeq" id="WP_011465227.1">
    <property type="nucleotide sequence ID" value="NC_007908.1"/>
</dbReference>
<dbReference type="SMR" id="Q21U92"/>
<dbReference type="STRING" id="338969.Rfer_2950"/>
<dbReference type="KEGG" id="rfr:Rfer_2950"/>
<dbReference type="eggNOG" id="COG0106">
    <property type="taxonomic scope" value="Bacteria"/>
</dbReference>
<dbReference type="HOGENOM" id="CLU_048577_1_1_4"/>
<dbReference type="OrthoDB" id="9807749at2"/>
<dbReference type="UniPathway" id="UPA00031">
    <property type="reaction ID" value="UER00009"/>
</dbReference>
<dbReference type="Proteomes" id="UP000008332">
    <property type="component" value="Chromosome"/>
</dbReference>
<dbReference type="GO" id="GO:0005737">
    <property type="term" value="C:cytoplasm"/>
    <property type="evidence" value="ECO:0007669"/>
    <property type="project" value="UniProtKB-SubCell"/>
</dbReference>
<dbReference type="GO" id="GO:0003949">
    <property type="term" value="F:1-(5-phosphoribosyl)-5-[(5-phosphoribosylamino)methylideneamino]imidazole-4-carboxamide isomerase activity"/>
    <property type="evidence" value="ECO:0007669"/>
    <property type="project" value="UniProtKB-UniRule"/>
</dbReference>
<dbReference type="GO" id="GO:0000105">
    <property type="term" value="P:L-histidine biosynthetic process"/>
    <property type="evidence" value="ECO:0007669"/>
    <property type="project" value="UniProtKB-UniRule"/>
</dbReference>
<dbReference type="GO" id="GO:0000162">
    <property type="term" value="P:L-tryptophan biosynthetic process"/>
    <property type="evidence" value="ECO:0007669"/>
    <property type="project" value="TreeGrafter"/>
</dbReference>
<dbReference type="CDD" id="cd04732">
    <property type="entry name" value="HisA"/>
    <property type="match status" value="1"/>
</dbReference>
<dbReference type="FunFam" id="3.20.20.70:FF:000009">
    <property type="entry name" value="1-(5-phosphoribosyl)-5-[(5-phosphoribosylamino)methylideneamino] imidazole-4-carboxamide isomerase"/>
    <property type="match status" value="1"/>
</dbReference>
<dbReference type="Gene3D" id="3.20.20.70">
    <property type="entry name" value="Aldolase class I"/>
    <property type="match status" value="1"/>
</dbReference>
<dbReference type="HAMAP" id="MF_01014">
    <property type="entry name" value="HisA"/>
    <property type="match status" value="1"/>
</dbReference>
<dbReference type="InterPro" id="IPR013785">
    <property type="entry name" value="Aldolase_TIM"/>
</dbReference>
<dbReference type="InterPro" id="IPR006062">
    <property type="entry name" value="His_biosynth"/>
</dbReference>
<dbReference type="InterPro" id="IPR006063">
    <property type="entry name" value="HisA_bact_arch"/>
</dbReference>
<dbReference type="InterPro" id="IPR044524">
    <property type="entry name" value="Isoase_HisA-like"/>
</dbReference>
<dbReference type="InterPro" id="IPR023016">
    <property type="entry name" value="Isoase_HisA-like_bact"/>
</dbReference>
<dbReference type="InterPro" id="IPR011060">
    <property type="entry name" value="RibuloseP-bd_barrel"/>
</dbReference>
<dbReference type="NCBIfam" id="TIGR00007">
    <property type="entry name" value="1-(5-phosphoribosyl)-5-[(5-phosphoribosylamino)methylideneamino]imidazole-4-carboxamide isomerase"/>
    <property type="match status" value="1"/>
</dbReference>
<dbReference type="NCBIfam" id="NF010112">
    <property type="entry name" value="PRK13585.1"/>
    <property type="match status" value="1"/>
</dbReference>
<dbReference type="PANTHER" id="PTHR43090">
    <property type="entry name" value="1-(5-PHOSPHORIBOSYL)-5-[(5-PHOSPHORIBOSYLAMINO)METHYLIDENEAMINO] IMIDAZOLE-4-CARBOXAMIDE ISOMERASE"/>
    <property type="match status" value="1"/>
</dbReference>
<dbReference type="PANTHER" id="PTHR43090:SF2">
    <property type="entry name" value="1-(5-PHOSPHORIBOSYL)-5-[(5-PHOSPHORIBOSYLAMINO)METHYLIDENEAMINO] IMIDAZOLE-4-CARBOXAMIDE ISOMERASE"/>
    <property type="match status" value="1"/>
</dbReference>
<dbReference type="Pfam" id="PF00977">
    <property type="entry name" value="His_biosynth"/>
    <property type="match status" value="1"/>
</dbReference>
<dbReference type="SUPFAM" id="SSF51366">
    <property type="entry name" value="Ribulose-phoshate binding barrel"/>
    <property type="match status" value="1"/>
</dbReference>
<organism>
    <name type="scientific">Albidiferax ferrireducens (strain ATCC BAA-621 / DSM 15236 / T118)</name>
    <name type="common">Rhodoferax ferrireducens</name>
    <dbReference type="NCBI Taxonomy" id="338969"/>
    <lineage>
        <taxon>Bacteria</taxon>
        <taxon>Pseudomonadati</taxon>
        <taxon>Pseudomonadota</taxon>
        <taxon>Betaproteobacteria</taxon>
        <taxon>Burkholderiales</taxon>
        <taxon>Comamonadaceae</taxon>
        <taxon>Rhodoferax</taxon>
    </lineage>
</organism>
<comment type="catalytic activity">
    <reaction evidence="1">
        <text>1-(5-phospho-beta-D-ribosyl)-5-[(5-phospho-beta-D-ribosylamino)methylideneamino]imidazole-4-carboxamide = 5-[(5-phospho-1-deoxy-D-ribulos-1-ylimino)methylamino]-1-(5-phospho-beta-D-ribosyl)imidazole-4-carboxamide</text>
        <dbReference type="Rhea" id="RHEA:15469"/>
        <dbReference type="ChEBI" id="CHEBI:58435"/>
        <dbReference type="ChEBI" id="CHEBI:58525"/>
        <dbReference type="EC" id="5.3.1.16"/>
    </reaction>
</comment>
<comment type="pathway">
    <text evidence="1">Amino-acid biosynthesis; L-histidine biosynthesis; L-histidine from 5-phospho-alpha-D-ribose 1-diphosphate: step 4/9.</text>
</comment>
<comment type="subcellular location">
    <subcellularLocation>
        <location evidence="1">Cytoplasm</location>
    </subcellularLocation>
</comment>
<comment type="similarity">
    <text evidence="1">Belongs to the HisA/HisF family.</text>
</comment>
<keyword id="KW-0028">Amino-acid biosynthesis</keyword>
<keyword id="KW-0963">Cytoplasm</keyword>
<keyword id="KW-0368">Histidine biosynthesis</keyword>
<keyword id="KW-0413">Isomerase</keyword>
<keyword id="KW-1185">Reference proteome</keyword>
<evidence type="ECO:0000255" key="1">
    <source>
        <dbReference type="HAMAP-Rule" id="MF_01014"/>
    </source>
</evidence>
<feature type="chain" id="PRO_0000290523" description="1-(5-phosphoribosyl)-5-[(5-phosphoribosylamino)methylideneamino] imidazole-4-carboxamide isomerase">
    <location>
        <begin position="1"/>
        <end position="246"/>
    </location>
</feature>
<feature type="active site" description="Proton acceptor" evidence="1">
    <location>
        <position position="8"/>
    </location>
</feature>
<feature type="active site" description="Proton donor" evidence="1">
    <location>
        <position position="131"/>
    </location>
</feature>
<name>HIS4_ALBFT</name>
<sequence>MLLIPAIDLKDGHCVRLKQGDMDQSTTFSEEPFVMARNWVDKGARRLHLVDLNGAFAGHPKNELAIRKILKDVGSEVDVQLGGGIRDLDTIERYLDAGLRYVIIGTAAVKNPGFLQDACTAFGGHIIVGLDARDGKIATDGWSKLTRHDVVDLAKKFEDYGVESIIYTDISRDGMLSGINIEATVRLAQALTIPVIASGGLSGMADIEALCAVENEGIEGVICGRAIYSGDLDFEAAQERANELNG</sequence>
<proteinExistence type="inferred from homology"/>
<reference key="1">
    <citation type="submission" date="2006-02" db="EMBL/GenBank/DDBJ databases">
        <title>Complete sequence of chromosome of Rhodoferax ferrireducens DSM 15236.</title>
        <authorList>
            <person name="Copeland A."/>
            <person name="Lucas S."/>
            <person name="Lapidus A."/>
            <person name="Barry K."/>
            <person name="Detter J.C."/>
            <person name="Glavina del Rio T."/>
            <person name="Hammon N."/>
            <person name="Israni S."/>
            <person name="Pitluck S."/>
            <person name="Brettin T."/>
            <person name="Bruce D."/>
            <person name="Han C."/>
            <person name="Tapia R."/>
            <person name="Gilna P."/>
            <person name="Kiss H."/>
            <person name="Schmutz J."/>
            <person name="Larimer F."/>
            <person name="Land M."/>
            <person name="Kyrpides N."/>
            <person name="Ivanova N."/>
            <person name="Richardson P."/>
        </authorList>
    </citation>
    <scope>NUCLEOTIDE SEQUENCE [LARGE SCALE GENOMIC DNA]</scope>
    <source>
        <strain>ATCC BAA-621 / DSM 15236 / T118</strain>
    </source>
</reference>
<gene>
    <name evidence="1" type="primary">hisA</name>
    <name type="ordered locus">Rfer_2950</name>
</gene>